<gene>
    <name type="ordered locus">SAV1407</name>
</gene>
<feature type="chain" id="PRO_0000294015" description="Putative branched-chain amino acid carrier protein SAV1407">
    <location>
        <begin position="1"/>
        <end position="447"/>
    </location>
</feature>
<feature type="transmembrane region" description="Helical" evidence="2">
    <location>
        <begin position="6"/>
        <end position="26"/>
    </location>
</feature>
<feature type="transmembrane region" description="Helical" evidence="2">
    <location>
        <begin position="40"/>
        <end position="60"/>
    </location>
</feature>
<feature type="transmembrane region" description="Helical" evidence="2">
    <location>
        <begin position="74"/>
        <end position="94"/>
    </location>
</feature>
<feature type="transmembrane region" description="Helical" evidence="2">
    <location>
        <begin position="114"/>
        <end position="134"/>
    </location>
</feature>
<feature type="transmembrane region" description="Helical" evidence="2">
    <location>
        <begin position="143"/>
        <end position="163"/>
    </location>
</feature>
<feature type="transmembrane region" description="Helical" evidence="2">
    <location>
        <begin position="193"/>
        <end position="213"/>
    </location>
</feature>
<feature type="transmembrane region" description="Helical" evidence="2">
    <location>
        <begin position="229"/>
        <end position="249"/>
    </location>
</feature>
<feature type="transmembrane region" description="Helical" evidence="2">
    <location>
        <begin position="290"/>
        <end position="310"/>
    </location>
</feature>
<feature type="transmembrane region" description="Helical" evidence="2">
    <location>
        <begin position="326"/>
        <end position="346"/>
    </location>
</feature>
<feature type="transmembrane region" description="Helical" evidence="2">
    <location>
        <begin position="350"/>
        <end position="370"/>
    </location>
</feature>
<feature type="transmembrane region" description="Helical" evidence="2">
    <location>
        <begin position="382"/>
        <end position="402"/>
    </location>
</feature>
<feature type="transmembrane region" description="Helical" evidence="2">
    <location>
        <begin position="417"/>
        <end position="437"/>
    </location>
</feature>
<protein>
    <recommendedName>
        <fullName>Putative branched-chain amino acid carrier protein SAV1407</fullName>
    </recommendedName>
</protein>
<keyword id="KW-0029">Amino-acid transport</keyword>
<keyword id="KW-1003">Cell membrane</keyword>
<keyword id="KW-0472">Membrane</keyword>
<keyword id="KW-0812">Transmembrane</keyword>
<keyword id="KW-1133">Transmembrane helix</keyword>
<keyword id="KW-0813">Transport</keyword>
<evidence type="ECO:0000250" key="1"/>
<evidence type="ECO:0000255" key="2"/>
<evidence type="ECO:0000305" key="3"/>
<organism>
    <name type="scientific">Staphylococcus aureus (strain Mu50 / ATCC 700699)</name>
    <dbReference type="NCBI Taxonomy" id="158878"/>
    <lineage>
        <taxon>Bacteria</taxon>
        <taxon>Bacillati</taxon>
        <taxon>Bacillota</taxon>
        <taxon>Bacilli</taxon>
        <taxon>Bacillales</taxon>
        <taxon>Staphylococcaceae</taxon>
        <taxon>Staphylococcus</taxon>
    </lineage>
</organism>
<sequence length="447" mass="48815">MNKNTWVIGFTLFAMFFGAGNLIFPPNLGLDSGQFFWPAILAFVLTGIGLPLLGVIVGALDKEGYIGALNKISPKFSILFLIIIYLTIGPLFAIPRTASTSFEMTITPIIHSNSSIALFIFTIIYFIVVLYICLNPSKLIDRIGSLLTPLLLITILAMIIKGYLDFSGNSAGKGNEALYHSNFSSFAEGFTQGYLTMDAIAAIAFSMIVVNAVKLTGITKTNQIFKQTLTAGLIAAVALIFIYISLGYIGNHMPVSDMTLDQLKSKDRNIGTYLLTTMASTGFGSFGKYLLGIIVALACLTTACGLIVAVSEYFHRIVPKVSYKAFVLVFILMSFIIANQGLNAVISMSIPVLSIVYPVAITVVLLILIAKFIPTKRISQQIPVIIVFILSIFSVISKLGWLKINFIESLPLRAYSLEWFPVAIIATILGYLVGIFVKQDPIKYQQE</sequence>
<comment type="function">
    <text evidence="1 3">Component of the transport system for branched-chain amino acids (leucine, isoleucine and valine), which is coupled to a proton motive force (Potential). Contributes to NaCl tolerance (By similarity).</text>
</comment>
<comment type="subcellular location">
    <subcellularLocation>
        <location evidence="3">Cell membrane</location>
        <topology evidence="3">Multi-pass membrane protein</topology>
    </subcellularLocation>
</comment>
<comment type="similarity">
    <text evidence="3">Belongs to the branched chain amino acid transporter family.</text>
</comment>
<dbReference type="EMBL" id="BA000017">
    <property type="protein sequence ID" value="BAB57569.1"/>
    <property type="molecule type" value="Genomic_DNA"/>
</dbReference>
<dbReference type="KEGG" id="sav:SAV1407"/>
<dbReference type="HOGENOM" id="CLU_036807_0_1_9"/>
<dbReference type="PhylomeDB" id="Q99U80"/>
<dbReference type="Proteomes" id="UP000002481">
    <property type="component" value="Chromosome"/>
</dbReference>
<dbReference type="GO" id="GO:0005886">
    <property type="term" value="C:plasma membrane"/>
    <property type="evidence" value="ECO:0007669"/>
    <property type="project" value="UniProtKB-SubCell"/>
</dbReference>
<dbReference type="GO" id="GO:0015188">
    <property type="term" value="F:L-isoleucine transmembrane transporter activity"/>
    <property type="evidence" value="ECO:0007669"/>
    <property type="project" value="TreeGrafter"/>
</dbReference>
<dbReference type="GO" id="GO:0015190">
    <property type="term" value="F:L-leucine transmembrane transporter activity"/>
    <property type="evidence" value="ECO:0007669"/>
    <property type="project" value="TreeGrafter"/>
</dbReference>
<dbReference type="GO" id="GO:0005304">
    <property type="term" value="F:L-valine transmembrane transporter activity"/>
    <property type="evidence" value="ECO:0007669"/>
    <property type="project" value="TreeGrafter"/>
</dbReference>
<dbReference type="GO" id="GO:0015818">
    <property type="term" value="P:isoleucine transport"/>
    <property type="evidence" value="ECO:0007669"/>
    <property type="project" value="TreeGrafter"/>
</dbReference>
<dbReference type="GO" id="GO:0015820">
    <property type="term" value="P:L-leucine transport"/>
    <property type="evidence" value="ECO:0007669"/>
    <property type="project" value="TreeGrafter"/>
</dbReference>
<dbReference type="FunFam" id="1.20.1740.10:FF:000068">
    <property type="entry name" value="Branched-chain amino acid transport system carrier protein"/>
    <property type="match status" value="1"/>
</dbReference>
<dbReference type="Gene3D" id="1.20.1740.10">
    <property type="entry name" value="Amino acid/polyamine transporter I"/>
    <property type="match status" value="1"/>
</dbReference>
<dbReference type="InterPro" id="IPR004685">
    <property type="entry name" value="Brnchd-chn_aa_trnsp_Livcs"/>
</dbReference>
<dbReference type="NCBIfam" id="TIGR00796">
    <property type="entry name" value="livcs"/>
    <property type="match status" value="1"/>
</dbReference>
<dbReference type="PANTHER" id="PTHR30588:SF7">
    <property type="entry name" value="BRANCHED-CHAIN AMINO ACID CARRIER PROTEIN SAOUHSC_01411-RELATED"/>
    <property type="match status" value="1"/>
</dbReference>
<dbReference type="PANTHER" id="PTHR30588">
    <property type="entry name" value="BRANCHED-CHAIN AMINO ACID TRANSPORT SYSTEM 2 CARRIER PROTEIN"/>
    <property type="match status" value="1"/>
</dbReference>
<dbReference type="Pfam" id="PF05525">
    <property type="entry name" value="Branch_AA_trans"/>
    <property type="match status" value="1"/>
</dbReference>
<accession>Q99U80</accession>
<name>BRNQL_STAAM</name>
<reference key="1">
    <citation type="journal article" date="2001" name="Lancet">
        <title>Whole genome sequencing of meticillin-resistant Staphylococcus aureus.</title>
        <authorList>
            <person name="Kuroda M."/>
            <person name="Ohta T."/>
            <person name="Uchiyama I."/>
            <person name="Baba T."/>
            <person name="Yuzawa H."/>
            <person name="Kobayashi I."/>
            <person name="Cui L."/>
            <person name="Oguchi A."/>
            <person name="Aoki K."/>
            <person name="Nagai Y."/>
            <person name="Lian J.-Q."/>
            <person name="Ito T."/>
            <person name="Kanamori M."/>
            <person name="Matsumaru H."/>
            <person name="Maruyama A."/>
            <person name="Murakami H."/>
            <person name="Hosoyama A."/>
            <person name="Mizutani-Ui Y."/>
            <person name="Takahashi N.K."/>
            <person name="Sawano T."/>
            <person name="Inoue R."/>
            <person name="Kaito C."/>
            <person name="Sekimizu K."/>
            <person name="Hirakawa H."/>
            <person name="Kuhara S."/>
            <person name="Goto S."/>
            <person name="Yabuzaki J."/>
            <person name="Kanehisa M."/>
            <person name="Yamashita A."/>
            <person name="Oshima K."/>
            <person name="Furuya K."/>
            <person name="Yoshino C."/>
            <person name="Shiba T."/>
            <person name="Hattori M."/>
            <person name="Ogasawara N."/>
            <person name="Hayashi H."/>
            <person name="Hiramatsu K."/>
        </authorList>
    </citation>
    <scope>NUCLEOTIDE SEQUENCE [LARGE SCALE GENOMIC DNA]</scope>
    <source>
        <strain>Mu50 / ATCC 700699</strain>
    </source>
</reference>
<proteinExistence type="inferred from homology"/>